<comment type="function">
    <text evidence="2">A terminal oxidase that produces a proton motive force by the vectorial transfer of protons across the inner membrane. It is the component of the aerobic respiratory chain of E.coli that predominates when cells are grown at low aeration. Generates a proton motive force using protons and electrons from opposite sides of the membrane to generate H(2)O, transferring 1 proton/electron.</text>
</comment>
<comment type="catalytic activity">
    <reaction evidence="2">
        <text>2 a ubiquinol + O2(in) + 4 H(+)(in) = 2 a ubiquinone + 2 H2O(in) + 4 H(+)(out)</text>
        <dbReference type="Rhea" id="RHEA:40527"/>
        <dbReference type="Rhea" id="RHEA-COMP:9565"/>
        <dbReference type="Rhea" id="RHEA-COMP:9566"/>
        <dbReference type="ChEBI" id="CHEBI:15377"/>
        <dbReference type="ChEBI" id="CHEBI:15378"/>
        <dbReference type="ChEBI" id="CHEBI:15379"/>
        <dbReference type="ChEBI" id="CHEBI:16389"/>
        <dbReference type="ChEBI" id="CHEBI:17976"/>
        <dbReference type="EC" id="7.1.1.7"/>
    </reaction>
</comment>
<comment type="cofactor">
    <cofactor evidence="2">
        <name>heme b</name>
        <dbReference type="ChEBI" id="CHEBI:60344"/>
    </cofactor>
    <text evidence="2">Binds 1 protoheme IX center (heme b595) per heterodimer, in conjunction with CydA.</text>
</comment>
<comment type="cofactor">
    <cofactor evidence="2">
        <name>heme d cis-diol</name>
        <dbReference type="ChEBI" id="CHEBI:62814"/>
    </cofactor>
    <text evidence="2">Binds 1 iron-chlorin (heme d or cytochrome d) per heterodimer, in conjunction with CydA.</text>
</comment>
<comment type="pathway">
    <text>Energy metabolism; oxidative phosphorylation.</text>
</comment>
<comment type="subunit">
    <text evidence="2">Heterodimer of subunits I and II.</text>
</comment>
<comment type="subcellular location">
    <subcellularLocation>
        <location evidence="2">Cell inner membrane</location>
        <topology evidence="2">Multi-pass membrane protein</topology>
    </subcellularLocation>
</comment>
<comment type="similarity">
    <text evidence="3">Belongs to the cytochrome ubiquinol oxidase subunit 2 family.</text>
</comment>
<reference key="1">
    <citation type="journal article" date="2002" name="Proc. Natl. Acad. Sci. U.S.A.">
        <title>Extensive mosaic structure revealed by the complete genome sequence of uropathogenic Escherichia coli.</title>
        <authorList>
            <person name="Welch R.A."/>
            <person name="Burland V."/>
            <person name="Plunkett G. III"/>
            <person name="Redford P."/>
            <person name="Roesch P."/>
            <person name="Rasko D."/>
            <person name="Buckles E.L."/>
            <person name="Liou S.-R."/>
            <person name="Boutin A."/>
            <person name="Hackett J."/>
            <person name="Stroud D."/>
            <person name="Mayhew G.F."/>
            <person name="Rose D.J."/>
            <person name="Zhou S."/>
            <person name="Schwartz D.C."/>
            <person name="Perna N.T."/>
            <person name="Mobley H.L.T."/>
            <person name="Donnenberg M.S."/>
            <person name="Blattner F.R."/>
        </authorList>
    </citation>
    <scope>NUCLEOTIDE SEQUENCE [LARGE SCALE GENOMIC DNA]</scope>
    <source>
        <strain>CFT073 / ATCC 700928 / UPEC</strain>
    </source>
</reference>
<proteinExistence type="inferred from homology"/>
<accession>P0ABK3</accession>
<accession>P11027</accession>
<gene>
    <name type="primary">cydB</name>
    <name type="ordered locus">c0812</name>
</gene>
<keyword id="KW-0997">Cell inner membrane</keyword>
<keyword id="KW-1003">Cell membrane</keyword>
<keyword id="KW-0249">Electron transport</keyword>
<keyword id="KW-0291">Formylation</keyword>
<keyword id="KW-0349">Heme</keyword>
<keyword id="KW-0408">Iron</keyword>
<keyword id="KW-0472">Membrane</keyword>
<keyword id="KW-0479">Metal-binding</keyword>
<keyword id="KW-1185">Reference proteome</keyword>
<keyword id="KW-1278">Translocase</keyword>
<keyword id="KW-0812">Transmembrane</keyword>
<keyword id="KW-1133">Transmembrane helix</keyword>
<keyword id="KW-0813">Transport</keyword>
<name>CYDB_ECOL6</name>
<sequence length="379" mass="42453">MIDYEVLRFIWWLLVGVLLIGFAVTDGFDMGVGMLTRFLGRNDTERRIMINSIAPHWDGNQVWLITAGGALFAAWPMVYAAAFSGFYVAMILVLASLFFRPVGFDYRSKIEETRWRNMWDWGIFIGSFVPPLVIGVAFGNLLQGVPFNVDEYLRLYYTGNFFQLLNPFGLLAGVVSVGMIITQGATYLQMRTVGELHLRTRATAQVAALVTLVCFALAGVWVMYGIDGYVVKSTMDHYAASNPLNKEVVREAGAWLVNFNNTPILWAIPALGVVLPLLTILTARMDKAAWAFVFSSLTLACIILTAGIAMFPFVMPSSTMMNASLTMWDATSSQLTLNVMTWVAVVLVPIILLYTAWCYWKMFGRITKEDIERNTHSLY</sequence>
<feature type="chain" id="PRO_0000183927" description="Cytochrome bd-I ubiquinol oxidase subunit 2">
    <location>
        <begin position="1"/>
        <end position="379"/>
    </location>
</feature>
<feature type="topological domain" description="Cytoplasmic" evidence="3">
    <location>
        <begin position="1"/>
        <end position="8"/>
    </location>
</feature>
<feature type="transmembrane region" description="Helical" evidence="3">
    <location>
        <begin position="9"/>
        <end position="28"/>
    </location>
</feature>
<feature type="topological domain" description="Periplasmic" evidence="3">
    <location>
        <begin position="29"/>
        <end position="79"/>
    </location>
</feature>
<feature type="transmembrane region" description="Helical" evidence="3">
    <location>
        <begin position="80"/>
        <end position="99"/>
    </location>
</feature>
<feature type="topological domain" description="Cytoplasmic" evidence="3">
    <location>
        <begin position="100"/>
        <end position="122"/>
    </location>
</feature>
<feature type="transmembrane region" description="Helical" evidence="3">
    <location>
        <begin position="123"/>
        <end position="142"/>
    </location>
</feature>
<feature type="topological domain" description="Periplasmic" evidence="3">
    <location>
        <begin position="143"/>
        <end position="164"/>
    </location>
</feature>
<feature type="transmembrane region" description="Helical" evidence="3">
    <location>
        <begin position="165"/>
        <end position="184"/>
    </location>
</feature>
<feature type="topological domain" description="Cytoplasmic" evidence="3">
    <location>
        <begin position="185"/>
        <end position="205"/>
    </location>
</feature>
<feature type="transmembrane region" description="Helical" evidence="3">
    <location>
        <begin position="206"/>
        <end position="225"/>
    </location>
</feature>
<feature type="topological domain" description="Periplasmic" evidence="3">
    <location>
        <begin position="226"/>
        <end position="262"/>
    </location>
</feature>
<feature type="transmembrane region" description="Helical" evidence="3">
    <location>
        <begin position="263"/>
        <end position="282"/>
    </location>
</feature>
<feature type="topological domain" description="Cytoplasmic" evidence="3">
    <location>
        <begin position="283"/>
        <end position="292"/>
    </location>
</feature>
<feature type="transmembrane region" description="Helical" evidence="3">
    <location>
        <begin position="293"/>
        <end position="312"/>
    </location>
</feature>
<feature type="topological domain" description="Periplasmic" evidence="3">
    <location>
        <begin position="313"/>
        <end position="336"/>
    </location>
</feature>
<feature type="transmembrane region" description="Helical" evidence="3">
    <location>
        <begin position="337"/>
        <end position="356"/>
    </location>
</feature>
<feature type="topological domain" description="Cytoplasmic" evidence="3">
    <location>
        <begin position="357"/>
        <end position="379"/>
    </location>
</feature>
<feature type="modified residue" description="N-formylmethionine" evidence="1">
    <location>
        <position position="1"/>
    </location>
</feature>
<organism>
    <name type="scientific">Escherichia coli O6:H1 (strain CFT073 / ATCC 700928 / UPEC)</name>
    <dbReference type="NCBI Taxonomy" id="199310"/>
    <lineage>
        <taxon>Bacteria</taxon>
        <taxon>Pseudomonadati</taxon>
        <taxon>Pseudomonadota</taxon>
        <taxon>Gammaproteobacteria</taxon>
        <taxon>Enterobacterales</taxon>
        <taxon>Enterobacteriaceae</taxon>
        <taxon>Escherichia</taxon>
    </lineage>
</organism>
<dbReference type="EC" id="7.1.1.7" evidence="2"/>
<dbReference type="EMBL" id="AE014075">
    <property type="protein sequence ID" value="AAN79285.1"/>
    <property type="molecule type" value="Genomic_DNA"/>
</dbReference>
<dbReference type="RefSeq" id="WP_000568275.1">
    <property type="nucleotide sequence ID" value="NZ_CP051263.1"/>
</dbReference>
<dbReference type="SMR" id="P0ABK3"/>
<dbReference type="STRING" id="199310.c0812"/>
<dbReference type="GeneID" id="93776751"/>
<dbReference type="KEGG" id="ecc:c0812"/>
<dbReference type="eggNOG" id="COG1294">
    <property type="taxonomic scope" value="Bacteria"/>
</dbReference>
<dbReference type="HOGENOM" id="CLU_049294_0_0_6"/>
<dbReference type="BioCyc" id="ECOL199310:C0812-MONOMER"/>
<dbReference type="UniPathway" id="UPA00705"/>
<dbReference type="Proteomes" id="UP000001410">
    <property type="component" value="Chromosome"/>
</dbReference>
<dbReference type="GO" id="GO:0070069">
    <property type="term" value="C:cytochrome complex"/>
    <property type="evidence" value="ECO:0007669"/>
    <property type="project" value="TreeGrafter"/>
</dbReference>
<dbReference type="GO" id="GO:0005886">
    <property type="term" value="C:plasma membrane"/>
    <property type="evidence" value="ECO:0007669"/>
    <property type="project" value="UniProtKB-SubCell"/>
</dbReference>
<dbReference type="GO" id="GO:0009055">
    <property type="term" value="F:electron transfer activity"/>
    <property type="evidence" value="ECO:0007669"/>
    <property type="project" value="TreeGrafter"/>
</dbReference>
<dbReference type="GO" id="GO:0046872">
    <property type="term" value="F:metal ion binding"/>
    <property type="evidence" value="ECO:0007669"/>
    <property type="project" value="UniProtKB-KW"/>
</dbReference>
<dbReference type="GO" id="GO:0016682">
    <property type="term" value="F:oxidoreductase activity, acting on diphenols and related substances as donors, oxygen as acceptor"/>
    <property type="evidence" value="ECO:0007669"/>
    <property type="project" value="TreeGrafter"/>
</dbReference>
<dbReference type="GO" id="GO:0019646">
    <property type="term" value="P:aerobic electron transport chain"/>
    <property type="evidence" value="ECO:0007669"/>
    <property type="project" value="TreeGrafter"/>
</dbReference>
<dbReference type="InterPro" id="IPR003317">
    <property type="entry name" value="Cyt-d_oxidase_su2"/>
</dbReference>
<dbReference type="NCBIfam" id="TIGR00203">
    <property type="entry name" value="cydB"/>
    <property type="match status" value="1"/>
</dbReference>
<dbReference type="NCBIfam" id="NF011579">
    <property type="entry name" value="PRK15003.1"/>
    <property type="match status" value="1"/>
</dbReference>
<dbReference type="PANTHER" id="PTHR43141:SF5">
    <property type="entry name" value="CYTOCHROME BD-I UBIQUINOL OXIDASE SUBUNIT 2"/>
    <property type="match status" value="1"/>
</dbReference>
<dbReference type="PANTHER" id="PTHR43141">
    <property type="entry name" value="CYTOCHROME BD2 SUBUNIT II"/>
    <property type="match status" value="1"/>
</dbReference>
<dbReference type="Pfam" id="PF02322">
    <property type="entry name" value="Cyt_bd_oxida_II"/>
    <property type="match status" value="1"/>
</dbReference>
<dbReference type="PIRSF" id="PIRSF000267">
    <property type="entry name" value="Cyt_oxidse_sub2"/>
    <property type="match status" value="1"/>
</dbReference>
<protein>
    <recommendedName>
        <fullName>Cytochrome bd-I ubiquinol oxidase subunit 2</fullName>
        <ecNumber evidence="2">7.1.1.7</ecNumber>
    </recommendedName>
    <alternativeName>
        <fullName>Cytochrome bd-I oxidase subunit II</fullName>
    </alternativeName>
    <alternativeName>
        <fullName>Cytochrome d ubiquinol oxidase subunit II</fullName>
    </alternativeName>
</protein>
<evidence type="ECO:0000250" key="1"/>
<evidence type="ECO:0000250" key="2">
    <source>
        <dbReference type="UniProtKB" id="P0ABK2"/>
    </source>
</evidence>
<evidence type="ECO:0000305" key="3"/>